<accession>Q89AV3</accession>
<feature type="chain" id="PRO_0000197983" description="Bis(5'-nucleosyl)-tetraphosphatase, symmetrical">
    <location>
        <begin position="1"/>
        <end position="278"/>
    </location>
</feature>
<evidence type="ECO:0000255" key="1">
    <source>
        <dbReference type="HAMAP-Rule" id="MF_00199"/>
    </source>
</evidence>
<gene>
    <name evidence="1" type="primary">apaH</name>
    <name type="ordered locus">bbp_132</name>
</gene>
<name>APAH_BUCBP</name>
<organism>
    <name type="scientific">Buchnera aphidicola subsp. Baizongia pistaciae (strain Bp)</name>
    <dbReference type="NCBI Taxonomy" id="224915"/>
    <lineage>
        <taxon>Bacteria</taxon>
        <taxon>Pseudomonadati</taxon>
        <taxon>Pseudomonadota</taxon>
        <taxon>Gammaproteobacteria</taxon>
        <taxon>Enterobacterales</taxon>
        <taxon>Erwiniaceae</taxon>
        <taxon>Buchnera</taxon>
    </lineage>
</organism>
<protein>
    <recommendedName>
        <fullName evidence="1">Bis(5'-nucleosyl)-tetraphosphatase, symmetrical</fullName>
        <ecNumber evidence="1">3.6.1.41</ecNumber>
    </recommendedName>
    <alternativeName>
        <fullName evidence="1">Ap4A hydrolase</fullName>
    </alternativeName>
    <alternativeName>
        <fullName evidence="1">Diadenosine 5',5'''-P1,P4-tetraphosphate pyrophosphohydrolase</fullName>
    </alternativeName>
    <alternativeName>
        <fullName evidence="1">Diadenosine tetraphosphatase</fullName>
    </alternativeName>
</protein>
<comment type="function">
    <text evidence="1">Hydrolyzes diadenosine 5',5'''-P1,P4-tetraphosphate to yield ADP.</text>
</comment>
<comment type="catalytic activity">
    <reaction evidence="1">
        <text>P(1),P(4)-bis(5'-adenosyl) tetraphosphate + H2O = 2 ADP + 2 H(+)</text>
        <dbReference type="Rhea" id="RHEA:24252"/>
        <dbReference type="ChEBI" id="CHEBI:15377"/>
        <dbReference type="ChEBI" id="CHEBI:15378"/>
        <dbReference type="ChEBI" id="CHEBI:58141"/>
        <dbReference type="ChEBI" id="CHEBI:456216"/>
        <dbReference type="EC" id="3.6.1.41"/>
    </reaction>
</comment>
<comment type="similarity">
    <text evidence="1">Belongs to the Ap4A hydrolase family.</text>
</comment>
<dbReference type="EC" id="3.6.1.41" evidence="1"/>
<dbReference type="EMBL" id="AE016826">
    <property type="protein sequence ID" value="AAO26866.1"/>
    <property type="molecule type" value="Genomic_DNA"/>
</dbReference>
<dbReference type="RefSeq" id="WP_011091267.1">
    <property type="nucleotide sequence ID" value="NC_004545.1"/>
</dbReference>
<dbReference type="SMR" id="Q89AV3"/>
<dbReference type="STRING" id="224915.bbp_132"/>
<dbReference type="KEGG" id="bab:bbp_132"/>
<dbReference type="eggNOG" id="COG0639">
    <property type="taxonomic scope" value="Bacteria"/>
</dbReference>
<dbReference type="HOGENOM" id="CLU_056184_2_0_6"/>
<dbReference type="OrthoDB" id="9807890at2"/>
<dbReference type="Proteomes" id="UP000000601">
    <property type="component" value="Chromosome"/>
</dbReference>
<dbReference type="GO" id="GO:0005737">
    <property type="term" value="C:cytoplasm"/>
    <property type="evidence" value="ECO:0007669"/>
    <property type="project" value="TreeGrafter"/>
</dbReference>
<dbReference type="GO" id="GO:0008803">
    <property type="term" value="F:bis(5'-nucleosyl)-tetraphosphatase (symmetrical) activity"/>
    <property type="evidence" value="ECO:0007669"/>
    <property type="project" value="UniProtKB-UniRule"/>
</dbReference>
<dbReference type="GO" id="GO:0016791">
    <property type="term" value="F:phosphatase activity"/>
    <property type="evidence" value="ECO:0007669"/>
    <property type="project" value="TreeGrafter"/>
</dbReference>
<dbReference type="GO" id="GO:0110154">
    <property type="term" value="P:RNA decapping"/>
    <property type="evidence" value="ECO:0007669"/>
    <property type="project" value="TreeGrafter"/>
</dbReference>
<dbReference type="CDD" id="cd07422">
    <property type="entry name" value="MPP_ApaH"/>
    <property type="match status" value="1"/>
</dbReference>
<dbReference type="Gene3D" id="3.60.21.10">
    <property type="match status" value="1"/>
</dbReference>
<dbReference type="HAMAP" id="MF_00199">
    <property type="entry name" value="ApaH"/>
    <property type="match status" value="1"/>
</dbReference>
<dbReference type="InterPro" id="IPR050126">
    <property type="entry name" value="Ap4A_hydrolase"/>
</dbReference>
<dbReference type="InterPro" id="IPR004617">
    <property type="entry name" value="ApaH"/>
</dbReference>
<dbReference type="InterPro" id="IPR004843">
    <property type="entry name" value="Calcineurin-like_PHP_ApaH"/>
</dbReference>
<dbReference type="InterPro" id="IPR029052">
    <property type="entry name" value="Metallo-depent_PP-like"/>
</dbReference>
<dbReference type="NCBIfam" id="TIGR00668">
    <property type="entry name" value="apaH"/>
    <property type="match status" value="1"/>
</dbReference>
<dbReference type="NCBIfam" id="NF001204">
    <property type="entry name" value="PRK00166.1"/>
    <property type="match status" value="1"/>
</dbReference>
<dbReference type="PANTHER" id="PTHR42850:SF11">
    <property type="entry name" value="BIS(5'-NUCLEOSYL)-TETRAPHOSPHATASE [SYMMETRICAL]"/>
    <property type="match status" value="1"/>
</dbReference>
<dbReference type="PANTHER" id="PTHR42850">
    <property type="entry name" value="METALLOPHOSPHOESTERASE"/>
    <property type="match status" value="1"/>
</dbReference>
<dbReference type="Pfam" id="PF00149">
    <property type="entry name" value="Metallophos"/>
    <property type="match status" value="1"/>
</dbReference>
<dbReference type="PIRSF" id="PIRSF000903">
    <property type="entry name" value="B5n-ttraPtase_sm"/>
    <property type="match status" value="1"/>
</dbReference>
<dbReference type="SUPFAM" id="SSF56300">
    <property type="entry name" value="Metallo-dependent phosphatases"/>
    <property type="match status" value="1"/>
</dbReference>
<keyword id="KW-0378">Hydrolase</keyword>
<keyword id="KW-1185">Reference proteome</keyword>
<sequence>MSTYFIGDIHGCFNELMHLLEKVSFDANSDVLWLTGDLINRGPKSLEVLRFVSSLGDNVKMVLGNHDVNLIALYASIKNSKKSSLMNNLLKSHDIDYLIYWLRKQPLFRVDHKKKIIMSHAGMYPYWDIQTASCYAKKIESMLCNHNYDTFLDFLYNNSDIKSKLYECTVFKNRELECLKLALNVFTRMRYCLPNGELDMTCKQSPSKNISSLLPWFFIKNSCLEDYCVFFGHWASLEKNITPKNIISLDTGCCWGGILSMFRLEDKKWFVQESEIKK</sequence>
<proteinExistence type="inferred from homology"/>
<reference key="1">
    <citation type="journal article" date="2003" name="Proc. Natl. Acad. Sci. U.S.A.">
        <title>Reductive genome evolution in Buchnera aphidicola.</title>
        <authorList>
            <person name="van Ham R.C.H.J."/>
            <person name="Kamerbeek J."/>
            <person name="Palacios C."/>
            <person name="Rausell C."/>
            <person name="Abascal F."/>
            <person name="Bastolla U."/>
            <person name="Fernandez J.M."/>
            <person name="Jimenez L."/>
            <person name="Postigo M."/>
            <person name="Silva F.J."/>
            <person name="Tamames J."/>
            <person name="Viguera E."/>
            <person name="Latorre A."/>
            <person name="Valencia A."/>
            <person name="Moran F."/>
            <person name="Moya A."/>
        </authorList>
    </citation>
    <scope>NUCLEOTIDE SEQUENCE [LARGE SCALE GENOMIC DNA]</scope>
    <source>
        <strain>Bp</strain>
    </source>
</reference>